<reference key="1">
    <citation type="journal article" date="2000" name="Nature">
        <title>The genome sequence of the plant pathogen Xylella fastidiosa.</title>
        <authorList>
            <person name="Simpson A.J.G."/>
            <person name="Reinach F.C."/>
            <person name="Arruda P."/>
            <person name="Abreu F.A."/>
            <person name="Acencio M."/>
            <person name="Alvarenga R."/>
            <person name="Alves L.M.C."/>
            <person name="Araya J.E."/>
            <person name="Baia G.S."/>
            <person name="Baptista C.S."/>
            <person name="Barros M.H."/>
            <person name="Bonaccorsi E.D."/>
            <person name="Bordin S."/>
            <person name="Bove J.M."/>
            <person name="Briones M.R.S."/>
            <person name="Bueno M.R.P."/>
            <person name="Camargo A.A."/>
            <person name="Camargo L.E.A."/>
            <person name="Carraro D.M."/>
            <person name="Carrer H."/>
            <person name="Colauto N.B."/>
            <person name="Colombo C."/>
            <person name="Costa F.F."/>
            <person name="Costa M.C.R."/>
            <person name="Costa-Neto C.M."/>
            <person name="Coutinho L.L."/>
            <person name="Cristofani M."/>
            <person name="Dias-Neto E."/>
            <person name="Docena C."/>
            <person name="El-Dorry H."/>
            <person name="Facincani A.P."/>
            <person name="Ferreira A.J.S."/>
            <person name="Ferreira V.C.A."/>
            <person name="Ferro J.A."/>
            <person name="Fraga J.S."/>
            <person name="Franca S.C."/>
            <person name="Franco M.C."/>
            <person name="Frohme M."/>
            <person name="Furlan L.R."/>
            <person name="Garnier M."/>
            <person name="Goldman G.H."/>
            <person name="Goldman M.H.S."/>
            <person name="Gomes S.L."/>
            <person name="Gruber A."/>
            <person name="Ho P.L."/>
            <person name="Hoheisel J.D."/>
            <person name="Junqueira M.L."/>
            <person name="Kemper E.L."/>
            <person name="Kitajima J.P."/>
            <person name="Krieger J.E."/>
            <person name="Kuramae E.E."/>
            <person name="Laigret F."/>
            <person name="Lambais M.R."/>
            <person name="Leite L.C.C."/>
            <person name="Lemos E.G.M."/>
            <person name="Lemos M.V.F."/>
            <person name="Lopes S.A."/>
            <person name="Lopes C.R."/>
            <person name="Machado J.A."/>
            <person name="Machado M.A."/>
            <person name="Madeira A.M.B.N."/>
            <person name="Madeira H.M.F."/>
            <person name="Marino C.L."/>
            <person name="Marques M.V."/>
            <person name="Martins E.A.L."/>
            <person name="Martins E.M.F."/>
            <person name="Matsukuma A.Y."/>
            <person name="Menck C.F.M."/>
            <person name="Miracca E.C."/>
            <person name="Miyaki C.Y."/>
            <person name="Monteiro-Vitorello C.B."/>
            <person name="Moon D.H."/>
            <person name="Nagai M.A."/>
            <person name="Nascimento A.L.T.O."/>
            <person name="Netto L.E.S."/>
            <person name="Nhani A. Jr."/>
            <person name="Nobrega F.G."/>
            <person name="Nunes L.R."/>
            <person name="Oliveira M.A."/>
            <person name="de Oliveira M.C."/>
            <person name="de Oliveira R.C."/>
            <person name="Palmieri D.A."/>
            <person name="Paris A."/>
            <person name="Peixoto B.R."/>
            <person name="Pereira G.A.G."/>
            <person name="Pereira H.A. Jr."/>
            <person name="Pesquero J.B."/>
            <person name="Quaggio R.B."/>
            <person name="Roberto P.G."/>
            <person name="Rodrigues V."/>
            <person name="de Rosa A.J.M."/>
            <person name="de Rosa V.E. Jr."/>
            <person name="de Sa R.G."/>
            <person name="Santelli R.V."/>
            <person name="Sawasaki H.E."/>
            <person name="da Silva A.C.R."/>
            <person name="da Silva A.M."/>
            <person name="da Silva F.R."/>
            <person name="Silva W.A. Jr."/>
            <person name="da Silveira J.F."/>
            <person name="Silvestri M.L.Z."/>
            <person name="Siqueira W.J."/>
            <person name="de Souza A.A."/>
            <person name="de Souza A.P."/>
            <person name="Terenzi M.F."/>
            <person name="Truffi D."/>
            <person name="Tsai S.M."/>
            <person name="Tsuhako M.H."/>
            <person name="Vallada H."/>
            <person name="Van Sluys M.A."/>
            <person name="Verjovski-Almeida S."/>
            <person name="Vettore A.L."/>
            <person name="Zago M.A."/>
            <person name="Zatz M."/>
            <person name="Meidanis J."/>
            <person name="Setubal J.C."/>
        </authorList>
    </citation>
    <scope>NUCLEOTIDE SEQUENCE [LARGE SCALE GENOMIC DNA]</scope>
    <source>
        <strain>9a5c</strain>
    </source>
</reference>
<accession>Q9PH47</accession>
<organism>
    <name type="scientific">Xylella fastidiosa (strain 9a5c)</name>
    <dbReference type="NCBI Taxonomy" id="160492"/>
    <lineage>
        <taxon>Bacteria</taxon>
        <taxon>Pseudomonadati</taxon>
        <taxon>Pseudomonadota</taxon>
        <taxon>Gammaproteobacteria</taxon>
        <taxon>Lysobacterales</taxon>
        <taxon>Lysobacteraceae</taxon>
        <taxon>Xylella</taxon>
    </lineage>
</organism>
<evidence type="ECO:0000255" key="1">
    <source>
        <dbReference type="HAMAP-Rule" id="MF_00012"/>
    </source>
</evidence>
<keyword id="KW-0001">2Fe-2S</keyword>
<keyword id="KW-0028">Amino-acid biosynthesis</keyword>
<keyword id="KW-0100">Branched-chain amino acid biosynthesis</keyword>
<keyword id="KW-0408">Iron</keyword>
<keyword id="KW-0411">Iron-sulfur</keyword>
<keyword id="KW-0456">Lyase</keyword>
<keyword id="KW-0460">Magnesium</keyword>
<keyword id="KW-0479">Metal-binding</keyword>
<name>ILVD_XYLFA</name>
<feature type="chain" id="PRO_0000103533" description="Dihydroxy-acid dehydratase">
    <location>
        <begin position="1"/>
        <end position="610"/>
    </location>
</feature>
<feature type="active site" description="Proton acceptor" evidence="1">
    <location>
        <position position="515"/>
    </location>
</feature>
<feature type="binding site" evidence="1">
    <location>
        <position position="81"/>
    </location>
    <ligand>
        <name>Mg(2+)</name>
        <dbReference type="ChEBI" id="CHEBI:18420"/>
    </ligand>
</feature>
<feature type="binding site" evidence="1">
    <location>
        <position position="122"/>
    </location>
    <ligand>
        <name>[2Fe-2S] cluster</name>
        <dbReference type="ChEBI" id="CHEBI:190135"/>
    </ligand>
</feature>
<feature type="binding site" evidence="1">
    <location>
        <position position="123"/>
    </location>
    <ligand>
        <name>Mg(2+)</name>
        <dbReference type="ChEBI" id="CHEBI:18420"/>
    </ligand>
</feature>
<feature type="binding site" description="via carbamate group" evidence="1">
    <location>
        <position position="124"/>
    </location>
    <ligand>
        <name>Mg(2+)</name>
        <dbReference type="ChEBI" id="CHEBI:18420"/>
    </ligand>
</feature>
<feature type="binding site" evidence="1">
    <location>
        <position position="193"/>
    </location>
    <ligand>
        <name>[2Fe-2S] cluster</name>
        <dbReference type="ChEBI" id="CHEBI:190135"/>
    </ligand>
</feature>
<feature type="binding site" evidence="1">
    <location>
        <position position="489"/>
    </location>
    <ligand>
        <name>Mg(2+)</name>
        <dbReference type="ChEBI" id="CHEBI:18420"/>
    </ligand>
</feature>
<feature type="modified residue" description="N6-carboxylysine" evidence="1">
    <location>
        <position position="124"/>
    </location>
</feature>
<proteinExistence type="inferred from homology"/>
<protein>
    <recommendedName>
        <fullName evidence="1">Dihydroxy-acid dehydratase</fullName>
        <shortName evidence="1">DAD</shortName>
        <ecNumber evidence="1">4.2.1.9</ecNumber>
    </recommendedName>
</protein>
<dbReference type="EC" id="4.2.1.9" evidence="1"/>
<dbReference type="EMBL" id="AE003849">
    <property type="protein sequence ID" value="AAF82912.1"/>
    <property type="molecule type" value="Genomic_DNA"/>
</dbReference>
<dbReference type="PIR" id="A82850">
    <property type="entry name" value="A82850"/>
</dbReference>
<dbReference type="RefSeq" id="WP_010892645.1">
    <property type="nucleotide sequence ID" value="NC_002488.3"/>
</dbReference>
<dbReference type="SMR" id="Q9PH47"/>
<dbReference type="STRING" id="160492.XF_0099"/>
<dbReference type="KEGG" id="xfa:XF_0099"/>
<dbReference type="eggNOG" id="COG0129">
    <property type="taxonomic scope" value="Bacteria"/>
</dbReference>
<dbReference type="HOGENOM" id="CLU_014271_4_2_6"/>
<dbReference type="UniPathway" id="UPA00047">
    <property type="reaction ID" value="UER00057"/>
</dbReference>
<dbReference type="UniPathway" id="UPA00049">
    <property type="reaction ID" value="UER00061"/>
</dbReference>
<dbReference type="Proteomes" id="UP000000812">
    <property type="component" value="Chromosome"/>
</dbReference>
<dbReference type="GO" id="GO:0005829">
    <property type="term" value="C:cytosol"/>
    <property type="evidence" value="ECO:0007669"/>
    <property type="project" value="TreeGrafter"/>
</dbReference>
<dbReference type="GO" id="GO:0051537">
    <property type="term" value="F:2 iron, 2 sulfur cluster binding"/>
    <property type="evidence" value="ECO:0007669"/>
    <property type="project" value="UniProtKB-UniRule"/>
</dbReference>
<dbReference type="GO" id="GO:0004160">
    <property type="term" value="F:dihydroxy-acid dehydratase activity"/>
    <property type="evidence" value="ECO:0007669"/>
    <property type="project" value="UniProtKB-UniRule"/>
</dbReference>
<dbReference type="GO" id="GO:0000287">
    <property type="term" value="F:magnesium ion binding"/>
    <property type="evidence" value="ECO:0007669"/>
    <property type="project" value="UniProtKB-UniRule"/>
</dbReference>
<dbReference type="GO" id="GO:0009097">
    <property type="term" value="P:isoleucine biosynthetic process"/>
    <property type="evidence" value="ECO:0007669"/>
    <property type="project" value="UniProtKB-UniRule"/>
</dbReference>
<dbReference type="GO" id="GO:0009099">
    <property type="term" value="P:L-valine biosynthetic process"/>
    <property type="evidence" value="ECO:0007669"/>
    <property type="project" value="UniProtKB-UniRule"/>
</dbReference>
<dbReference type="FunFam" id="3.50.30.80:FF:000001">
    <property type="entry name" value="Dihydroxy-acid dehydratase"/>
    <property type="match status" value="1"/>
</dbReference>
<dbReference type="Gene3D" id="3.50.30.80">
    <property type="entry name" value="IlvD/EDD C-terminal domain-like"/>
    <property type="match status" value="1"/>
</dbReference>
<dbReference type="HAMAP" id="MF_00012">
    <property type="entry name" value="IlvD"/>
    <property type="match status" value="1"/>
</dbReference>
<dbReference type="InterPro" id="IPR042096">
    <property type="entry name" value="Dihydro-acid_dehy_C"/>
</dbReference>
<dbReference type="InterPro" id="IPR004404">
    <property type="entry name" value="DihydroxyA_deHydtase"/>
</dbReference>
<dbReference type="InterPro" id="IPR020558">
    <property type="entry name" value="DiOHA_6PGluconate_deHydtase_CS"/>
</dbReference>
<dbReference type="InterPro" id="IPR056740">
    <property type="entry name" value="ILV_EDD_C"/>
</dbReference>
<dbReference type="InterPro" id="IPR000581">
    <property type="entry name" value="ILV_EDD_N"/>
</dbReference>
<dbReference type="InterPro" id="IPR037237">
    <property type="entry name" value="IlvD/EDD_N"/>
</dbReference>
<dbReference type="NCBIfam" id="TIGR00110">
    <property type="entry name" value="ilvD"/>
    <property type="match status" value="1"/>
</dbReference>
<dbReference type="NCBIfam" id="NF009103">
    <property type="entry name" value="PRK12448.1"/>
    <property type="match status" value="1"/>
</dbReference>
<dbReference type="PANTHER" id="PTHR43661">
    <property type="entry name" value="D-XYLONATE DEHYDRATASE"/>
    <property type="match status" value="1"/>
</dbReference>
<dbReference type="PANTHER" id="PTHR43661:SF3">
    <property type="entry name" value="D-XYLONATE DEHYDRATASE YAGF-RELATED"/>
    <property type="match status" value="1"/>
</dbReference>
<dbReference type="Pfam" id="PF24877">
    <property type="entry name" value="ILV_EDD_C"/>
    <property type="match status" value="1"/>
</dbReference>
<dbReference type="Pfam" id="PF00920">
    <property type="entry name" value="ILVD_EDD_N"/>
    <property type="match status" value="1"/>
</dbReference>
<dbReference type="SUPFAM" id="SSF143975">
    <property type="entry name" value="IlvD/EDD N-terminal domain-like"/>
    <property type="match status" value="1"/>
</dbReference>
<dbReference type="SUPFAM" id="SSF52016">
    <property type="entry name" value="LeuD/IlvD-like"/>
    <property type="match status" value="1"/>
</dbReference>
<dbReference type="PROSITE" id="PS00886">
    <property type="entry name" value="ILVD_EDD_1"/>
    <property type="match status" value="1"/>
</dbReference>
<dbReference type="PROSITE" id="PS00887">
    <property type="entry name" value="ILVD_EDD_2"/>
    <property type="match status" value="1"/>
</dbReference>
<comment type="function">
    <text evidence="1">Functions in the biosynthesis of branched-chain amino acids. Catalyzes the dehydration of (2R,3R)-2,3-dihydroxy-3-methylpentanoate (2,3-dihydroxy-3-methylvalerate) into 2-oxo-3-methylpentanoate (2-oxo-3-methylvalerate) and of (2R)-2,3-dihydroxy-3-methylbutanoate (2,3-dihydroxyisovalerate) into 2-oxo-3-methylbutanoate (2-oxoisovalerate), the penultimate precursor to L-isoleucine and L-valine, respectively.</text>
</comment>
<comment type="catalytic activity">
    <reaction evidence="1">
        <text>(2R)-2,3-dihydroxy-3-methylbutanoate = 3-methyl-2-oxobutanoate + H2O</text>
        <dbReference type="Rhea" id="RHEA:24809"/>
        <dbReference type="ChEBI" id="CHEBI:11851"/>
        <dbReference type="ChEBI" id="CHEBI:15377"/>
        <dbReference type="ChEBI" id="CHEBI:49072"/>
        <dbReference type="EC" id="4.2.1.9"/>
    </reaction>
    <physiologicalReaction direction="left-to-right" evidence="1">
        <dbReference type="Rhea" id="RHEA:24810"/>
    </physiologicalReaction>
</comment>
<comment type="catalytic activity">
    <reaction evidence="1">
        <text>(2R,3R)-2,3-dihydroxy-3-methylpentanoate = (S)-3-methyl-2-oxopentanoate + H2O</text>
        <dbReference type="Rhea" id="RHEA:27694"/>
        <dbReference type="ChEBI" id="CHEBI:15377"/>
        <dbReference type="ChEBI" id="CHEBI:35146"/>
        <dbReference type="ChEBI" id="CHEBI:49258"/>
        <dbReference type="EC" id="4.2.1.9"/>
    </reaction>
    <physiologicalReaction direction="left-to-right" evidence="1">
        <dbReference type="Rhea" id="RHEA:27695"/>
    </physiologicalReaction>
</comment>
<comment type="cofactor">
    <cofactor evidence="1">
        <name>[2Fe-2S] cluster</name>
        <dbReference type="ChEBI" id="CHEBI:190135"/>
    </cofactor>
    <text evidence="1">Binds 1 [2Fe-2S] cluster per subunit. This cluster acts as a Lewis acid cofactor.</text>
</comment>
<comment type="cofactor">
    <cofactor evidence="1">
        <name>Mg(2+)</name>
        <dbReference type="ChEBI" id="CHEBI:18420"/>
    </cofactor>
</comment>
<comment type="pathway">
    <text evidence="1">Amino-acid biosynthesis; L-isoleucine biosynthesis; L-isoleucine from 2-oxobutanoate: step 3/4.</text>
</comment>
<comment type="pathway">
    <text evidence="1">Amino-acid biosynthesis; L-valine biosynthesis; L-valine from pyruvate: step 3/4.</text>
</comment>
<comment type="subunit">
    <text evidence="1">Homodimer.</text>
</comment>
<comment type="similarity">
    <text evidence="1">Belongs to the IlvD/Edd family.</text>
</comment>
<gene>
    <name evidence="1" type="primary">ilvD</name>
    <name type="ordered locus">XF_0099</name>
</gene>
<sequence>MPEYRSKTSTYGRNMAGARALWRATGMKDDDFQKPIIAIANSFTQFVPGHVHLKDLGQLVAREIERLGGVAKEFNTIAVDDGIAMGHDGMLYSLPSREIIADSVEYMANAHCADALVCISNCDKITPGMLMASLRLNIPTVFVSGGPMEAGKTKLTDHKLDLVDAMVLAADPHASDEEVAAVERSACPTCGSCSGMFTANSMNCLTEALGLSLPGNGTVVATHSDRKQLFLNAGRTVIELCHRWYGNEDATALPRGIATFAAFENAITLDIAMGGSTNTILHLLAAAQEAEVPFTMQDIDRLSRNVPQLCKVAPNTQKYHIEDVHRAGGIFGILAELARGNLLHTDVATVHSKTLGEAIATWDIIGTQDEAVHTFYKAGPAGISTQVAFSQSTRWPSLDTDRTEGCIRDMEHAFSKEGGLAVLYGNIAQDGCVVKTAGVDASIHVFEGSALVYESQEAAVKGILSDEVQPGMIVVIRYEGPKGGPGMQEMLYPTSYLKSKGLGKQCALFTDGRFSGGTSGLSIGHASPEAAAGGAIGLIRDGDRIRIDIPQRAINVLISEEELASRRLEQHAIGWKPAQSRTRKVSSALKAYALLATSADKGAVRNKTLL</sequence>